<evidence type="ECO:0000255" key="1">
    <source>
        <dbReference type="HAMAP-Rule" id="MF_03159"/>
    </source>
</evidence>
<evidence type="ECO:0000305" key="2"/>
<evidence type="ECO:0000312" key="3">
    <source>
        <dbReference type="EMBL" id="EDX02906.1"/>
    </source>
</evidence>
<dbReference type="EC" id="5.1.99.6"/>
<dbReference type="EMBL" id="CM000162">
    <property type="protein sequence ID" value="EDX02906.1"/>
    <property type="status" value="ALT_INIT"/>
    <property type="molecule type" value="Genomic_DNA"/>
</dbReference>
<dbReference type="SMR" id="B4PXF5"/>
<dbReference type="EnsemblMetazoa" id="FBtr0261935">
    <property type="protein sequence ID" value="FBpp0260427"/>
    <property type="gene ID" value="FBgn0232993"/>
</dbReference>
<dbReference type="EnsemblMetazoa" id="XM_002101762.4">
    <property type="protein sequence ID" value="XP_002101798.1"/>
    <property type="gene ID" value="LOC6525979"/>
</dbReference>
<dbReference type="GeneID" id="6525979"/>
<dbReference type="KEGG" id="dya:Dyak_GE15417"/>
<dbReference type="eggNOG" id="KOG2585">
    <property type="taxonomic scope" value="Eukaryota"/>
</dbReference>
<dbReference type="OrthoDB" id="10064708at2759"/>
<dbReference type="Proteomes" id="UP000002282">
    <property type="component" value="Chromosome X"/>
</dbReference>
<dbReference type="GO" id="GO:0005739">
    <property type="term" value="C:mitochondrion"/>
    <property type="evidence" value="ECO:0007669"/>
    <property type="project" value="TreeGrafter"/>
</dbReference>
<dbReference type="GO" id="GO:0046872">
    <property type="term" value="F:metal ion binding"/>
    <property type="evidence" value="ECO:0007669"/>
    <property type="project" value="UniProtKB-KW"/>
</dbReference>
<dbReference type="GO" id="GO:0052856">
    <property type="term" value="F:NAD(P)HX epimerase activity"/>
    <property type="evidence" value="ECO:0007669"/>
    <property type="project" value="UniProtKB-UniRule"/>
</dbReference>
<dbReference type="GO" id="GO:0000166">
    <property type="term" value="F:nucleotide binding"/>
    <property type="evidence" value="ECO:0007669"/>
    <property type="project" value="UniProtKB-KW"/>
</dbReference>
<dbReference type="FunFam" id="3.40.50.10260:FF:000013">
    <property type="entry name" value="NAD(P)H-hydrate epimerase"/>
    <property type="match status" value="1"/>
</dbReference>
<dbReference type="Gene3D" id="3.40.50.10260">
    <property type="entry name" value="YjeF N-terminal domain"/>
    <property type="match status" value="1"/>
</dbReference>
<dbReference type="HAMAP" id="MF_01966">
    <property type="entry name" value="NADHX_epimerase"/>
    <property type="match status" value="1"/>
</dbReference>
<dbReference type="InterPro" id="IPR004443">
    <property type="entry name" value="YjeF_N_dom"/>
</dbReference>
<dbReference type="InterPro" id="IPR036652">
    <property type="entry name" value="YjeF_N_dom_sf"/>
</dbReference>
<dbReference type="InterPro" id="IPR032976">
    <property type="entry name" value="YJEFN_prot_NAXE-like"/>
</dbReference>
<dbReference type="NCBIfam" id="TIGR00197">
    <property type="entry name" value="yjeF_nterm"/>
    <property type="match status" value="1"/>
</dbReference>
<dbReference type="PANTHER" id="PTHR13232">
    <property type="entry name" value="NAD(P)H-HYDRATE EPIMERASE"/>
    <property type="match status" value="1"/>
</dbReference>
<dbReference type="PANTHER" id="PTHR13232:SF10">
    <property type="entry name" value="NAD(P)H-HYDRATE EPIMERASE"/>
    <property type="match status" value="1"/>
</dbReference>
<dbReference type="Pfam" id="PF03853">
    <property type="entry name" value="YjeF_N"/>
    <property type="match status" value="1"/>
</dbReference>
<dbReference type="SUPFAM" id="SSF64153">
    <property type="entry name" value="YjeF N-terminal domain-like"/>
    <property type="match status" value="1"/>
</dbReference>
<dbReference type="PROSITE" id="PS51385">
    <property type="entry name" value="YJEF_N"/>
    <property type="match status" value="1"/>
</dbReference>
<name>NNRE_DROYA</name>
<keyword id="KW-0413">Isomerase</keyword>
<keyword id="KW-0479">Metal-binding</keyword>
<keyword id="KW-0520">NAD</keyword>
<keyword id="KW-0521">NADP</keyword>
<keyword id="KW-0547">Nucleotide-binding</keyword>
<keyword id="KW-0630">Potassium</keyword>
<proteinExistence type="inferred from homology"/>
<accession>B4PXF5</accession>
<feature type="chain" id="PRO_0000379434" description="NAD(P)H-hydrate epimerase">
    <location>
        <begin position="1"/>
        <end position="230"/>
    </location>
</feature>
<feature type="domain" description="YjeF N-terminal" evidence="1">
    <location>
        <begin position="11"/>
        <end position="218"/>
    </location>
</feature>
<feature type="binding site" evidence="1">
    <location>
        <begin position="61"/>
        <end position="65"/>
    </location>
    <ligand>
        <name>(6S)-NADPHX</name>
        <dbReference type="ChEBI" id="CHEBI:64076"/>
    </ligand>
</feature>
<feature type="binding site" evidence="1">
    <location>
        <position position="62"/>
    </location>
    <ligand>
        <name>K(+)</name>
        <dbReference type="ChEBI" id="CHEBI:29103"/>
    </ligand>
</feature>
<feature type="binding site" evidence="1">
    <location>
        <position position="126"/>
    </location>
    <ligand>
        <name>K(+)</name>
        <dbReference type="ChEBI" id="CHEBI:29103"/>
    </ligand>
</feature>
<feature type="binding site" evidence="1">
    <location>
        <begin position="130"/>
        <end position="136"/>
    </location>
    <ligand>
        <name>(6S)-NADPHX</name>
        <dbReference type="ChEBI" id="CHEBI:64076"/>
    </ligand>
</feature>
<feature type="binding site" evidence="1">
    <location>
        <position position="159"/>
    </location>
    <ligand>
        <name>(6S)-NADPHX</name>
        <dbReference type="ChEBI" id="CHEBI:64076"/>
    </ligand>
</feature>
<feature type="binding site" evidence="1">
    <location>
        <position position="162"/>
    </location>
    <ligand>
        <name>K(+)</name>
        <dbReference type="ChEBI" id="CHEBI:29103"/>
    </ligand>
</feature>
<sequence>MDLKYLNQKEAIDVDQELFTEYKFSVDQLMELAGLSCAHAVAKCFPAEKHPRILVCCGPGNNGGDGLVAARHLSLMGYTPTIYYPKPTAKPLFENLSHQCQMMDICGVKECPSVATAASDYDLILDALFGFSFKPPVRADFVAVVELLQQTKLPIASVDIPSGWDVEKGKLTECDVEPALLISLTAPKLCARHFRGEHHYLGGRFVPPALQRKYGLNLPTYPGNELCVKL</sequence>
<reference evidence="3" key="1">
    <citation type="journal article" date="2007" name="Nature">
        <title>Evolution of genes and genomes on the Drosophila phylogeny.</title>
        <authorList>
            <consortium name="Drosophila 12 genomes consortium"/>
        </authorList>
    </citation>
    <scope>NUCLEOTIDE SEQUENCE [LARGE SCALE GENOMIC DNA]</scope>
    <source>
        <strain evidence="3">Tai18E2 / Tucson 14021-0261.01</strain>
    </source>
</reference>
<organism>
    <name type="scientific">Drosophila yakuba</name>
    <name type="common">Fruit fly</name>
    <dbReference type="NCBI Taxonomy" id="7245"/>
    <lineage>
        <taxon>Eukaryota</taxon>
        <taxon>Metazoa</taxon>
        <taxon>Ecdysozoa</taxon>
        <taxon>Arthropoda</taxon>
        <taxon>Hexapoda</taxon>
        <taxon>Insecta</taxon>
        <taxon>Pterygota</taxon>
        <taxon>Neoptera</taxon>
        <taxon>Endopterygota</taxon>
        <taxon>Diptera</taxon>
        <taxon>Brachycera</taxon>
        <taxon>Muscomorpha</taxon>
        <taxon>Ephydroidea</taxon>
        <taxon>Drosophilidae</taxon>
        <taxon>Drosophila</taxon>
        <taxon>Sophophora</taxon>
    </lineage>
</organism>
<comment type="function">
    <text evidence="1">Catalyzes the epimerization of the S- and R-forms of NAD(P)HX, a damaged form of NAD(P)H that is a result of enzymatic or heat-dependent hydration. This is a prerequisite for the S-specific NAD(P)H-hydrate dehydratase to allow the repair of both epimers of NAD(P)HX.</text>
</comment>
<comment type="catalytic activity">
    <reaction>
        <text>(6R)-NADHX = (6S)-NADHX</text>
        <dbReference type="Rhea" id="RHEA:32215"/>
        <dbReference type="ChEBI" id="CHEBI:64074"/>
        <dbReference type="ChEBI" id="CHEBI:64075"/>
        <dbReference type="EC" id="5.1.99.6"/>
    </reaction>
</comment>
<comment type="catalytic activity">
    <reaction>
        <text>(6R)-NADPHX = (6S)-NADPHX</text>
        <dbReference type="Rhea" id="RHEA:32227"/>
        <dbReference type="ChEBI" id="CHEBI:64076"/>
        <dbReference type="ChEBI" id="CHEBI:64077"/>
        <dbReference type="EC" id="5.1.99.6"/>
    </reaction>
</comment>
<comment type="cofactor">
    <cofactor evidence="1">
        <name>K(+)</name>
        <dbReference type="ChEBI" id="CHEBI:29103"/>
    </cofactor>
    <text evidence="1">Binds 1 potassium ion per subunit.</text>
</comment>
<comment type="similarity">
    <text evidence="1">Belongs to the NnrE/AIBP family.</text>
</comment>
<comment type="sequence caution" evidence="2">
    <conflict type="erroneous initiation">
        <sequence resource="EMBL-CDS" id="EDX02906"/>
    </conflict>
</comment>
<gene>
    <name type="ORF">GE15417</name>
</gene>
<protein>
    <recommendedName>
        <fullName evidence="1">NAD(P)H-hydrate epimerase</fullName>
        <ecNumber>5.1.99.6</ecNumber>
    </recommendedName>
    <alternativeName>
        <fullName evidence="1">NAD(P)HX epimerase</fullName>
    </alternativeName>
</protein>